<keyword id="KW-0010">Activator</keyword>
<keyword id="KW-0238">DNA-binding</keyword>
<keyword id="KW-0678">Repressor</keyword>
<keyword id="KW-0804">Transcription</keyword>
<keyword id="KW-0805">Transcription regulation</keyword>
<keyword id="KW-0843">Virulence</keyword>
<comment type="function">
    <text evidence="1">Global regulator with both positive and negative effects that mediates modulation of several genes involved in virulence. Also, modulates the expression of genes not previously implicated in pathogenesis (By similarity).</text>
</comment>
<comment type="induction">
    <text evidence="3">Up-regulated during anaerobic growth.</text>
</comment>
<comment type="similarity">
    <text evidence="4">Belongs to the rot family.</text>
</comment>
<feature type="chain" id="PRO_0000220544" description="HTH-type transcriptional regulator rot">
    <location>
        <begin position="1"/>
        <end position="166"/>
    </location>
</feature>
<feature type="DNA-binding region" description="H-T-H motif" evidence="2">
    <location>
        <begin position="87"/>
        <end position="110"/>
    </location>
</feature>
<proteinExistence type="evidence at transcript level"/>
<protein>
    <recommendedName>
        <fullName>HTH-type transcriptional regulator rot</fullName>
    </recommendedName>
    <alternativeName>
        <fullName>Repressor of toxins</fullName>
    </alternativeName>
</protein>
<dbReference type="EMBL" id="CP000046">
    <property type="protein sequence ID" value="AAW38340.1"/>
    <property type="molecule type" value="Genomic_DNA"/>
</dbReference>
<dbReference type="SMR" id="Q5HF12"/>
<dbReference type="KEGG" id="sac:SACOL1812"/>
<dbReference type="HOGENOM" id="CLU_132118_0_0_9"/>
<dbReference type="PRO" id="PR:Q5HF12"/>
<dbReference type="Proteomes" id="UP000000530">
    <property type="component" value="Chromosome"/>
</dbReference>
<dbReference type="GO" id="GO:0003677">
    <property type="term" value="F:DNA binding"/>
    <property type="evidence" value="ECO:0007669"/>
    <property type="project" value="UniProtKB-KW"/>
</dbReference>
<dbReference type="GO" id="GO:0003700">
    <property type="term" value="F:DNA-binding transcription factor activity"/>
    <property type="evidence" value="ECO:0007669"/>
    <property type="project" value="InterPro"/>
</dbReference>
<dbReference type="GO" id="GO:0006950">
    <property type="term" value="P:response to stress"/>
    <property type="evidence" value="ECO:0007669"/>
    <property type="project" value="TreeGrafter"/>
</dbReference>
<dbReference type="Gene3D" id="1.10.10.10">
    <property type="entry name" value="Winged helix-like DNA-binding domain superfamily/Winged helix DNA-binding domain"/>
    <property type="match status" value="1"/>
</dbReference>
<dbReference type="InterPro" id="IPR000835">
    <property type="entry name" value="HTH_MarR-typ"/>
</dbReference>
<dbReference type="InterPro" id="IPR039422">
    <property type="entry name" value="MarR/SlyA-like"/>
</dbReference>
<dbReference type="InterPro" id="IPR016998">
    <property type="entry name" value="Rot"/>
</dbReference>
<dbReference type="InterPro" id="IPR010166">
    <property type="entry name" value="SarA/Rot_dom"/>
</dbReference>
<dbReference type="InterPro" id="IPR055166">
    <property type="entry name" value="Transc_reg_Sar_Rot_HTH"/>
</dbReference>
<dbReference type="InterPro" id="IPR036388">
    <property type="entry name" value="WH-like_DNA-bd_sf"/>
</dbReference>
<dbReference type="InterPro" id="IPR036390">
    <property type="entry name" value="WH_DNA-bd_sf"/>
</dbReference>
<dbReference type="NCBIfam" id="TIGR01889">
    <property type="entry name" value="Staph_reg_Sar"/>
    <property type="match status" value="1"/>
</dbReference>
<dbReference type="PANTHER" id="PTHR33164:SF56">
    <property type="entry name" value="HTH-TYPE TRANSCRIPTIONAL REGULATOR MHQR"/>
    <property type="match status" value="1"/>
</dbReference>
<dbReference type="PANTHER" id="PTHR33164">
    <property type="entry name" value="TRANSCRIPTIONAL REGULATOR, MARR FAMILY"/>
    <property type="match status" value="1"/>
</dbReference>
<dbReference type="Pfam" id="PF22381">
    <property type="entry name" value="Staph_reg_Sar_Rot"/>
    <property type="match status" value="1"/>
</dbReference>
<dbReference type="PIRSF" id="PIRSF032474">
    <property type="entry name" value="TF_HTH_Rot"/>
    <property type="match status" value="1"/>
</dbReference>
<dbReference type="SMART" id="SM00347">
    <property type="entry name" value="HTH_MARR"/>
    <property type="match status" value="1"/>
</dbReference>
<dbReference type="SUPFAM" id="SSF46785">
    <property type="entry name" value="Winged helix' DNA-binding domain"/>
    <property type="match status" value="1"/>
</dbReference>
<reference key="1">
    <citation type="journal article" date="2005" name="J. Bacteriol.">
        <title>Insights on evolution of virulence and resistance from the complete genome analysis of an early methicillin-resistant Staphylococcus aureus strain and a biofilm-producing methicillin-resistant Staphylococcus epidermidis strain.</title>
        <authorList>
            <person name="Gill S.R."/>
            <person name="Fouts D.E."/>
            <person name="Archer G.L."/>
            <person name="Mongodin E.F."/>
            <person name="DeBoy R.T."/>
            <person name="Ravel J."/>
            <person name="Paulsen I.T."/>
            <person name="Kolonay J.F."/>
            <person name="Brinkac L.M."/>
            <person name="Beanan M.J."/>
            <person name="Dodson R.J."/>
            <person name="Daugherty S.C."/>
            <person name="Madupu R."/>
            <person name="Angiuoli S.V."/>
            <person name="Durkin A.S."/>
            <person name="Haft D.H."/>
            <person name="Vamathevan J.J."/>
            <person name="Khouri H."/>
            <person name="Utterback T.R."/>
            <person name="Lee C."/>
            <person name="Dimitrov G."/>
            <person name="Jiang L."/>
            <person name="Qin H."/>
            <person name="Weidman J."/>
            <person name="Tran K."/>
            <person name="Kang K.H."/>
            <person name="Hance I.R."/>
            <person name="Nelson K.E."/>
            <person name="Fraser C.M."/>
        </authorList>
    </citation>
    <scope>NUCLEOTIDE SEQUENCE [LARGE SCALE GENOMIC DNA]</scope>
    <source>
        <strain>COL</strain>
    </source>
</reference>
<reference key="2">
    <citation type="journal article" date="2007" name="J. Bacteriol.">
        <title>Anaerobic gene expression in Staphylococcus aureus.</title>
        <authorList>
            <person name="Fuchs S."/>
            <person name="Pane-Farre J."/>
            <person name="Kohler C."/>
            <person name="Hecker M."/>
            <person name="Engelmann S."/>
        </authorList>
    </citation>
    <scope>INDUCTION DURING ANAEROBIC GROWTH</scope>
</reference>
<gene>
    <name type="primary">rot</name>
    <name type="ordered locus">SACOL1812</name>
</gene>
<accession>Q5HF12</accession>
<sequence>MHKLAHTSFGIVGMFVNTCIVAKYVIINWEMFSMKKVNNDTVFGILQLETLLGDINSIFSEIESEYKMSREEILILLTLWQKGFMTLKEMDRFVEVKPYKRTRTYNNLVELEWIYKERPVDDERTVIIHFNEKLQQEKVELLNFISDAIASRATAMQNSLNAIIAV</sequence>
<organism>
    <name type="scientific">Staphylococcus aureus (strain COL)</name>
    <dbReference type="NCBI Taxonomy" id="93062"/>
    <lineage>
        <taxon>Bacteria</taxon>
        <taxon>Bacillati</taxon>
        <taxon>Bacillota</taxon>
        <taxon>Bacilli</taxon>
        <taxon>Bacillales</taxon>
        <taxon>Staphylococcaceae</taxon>
        <taxon>Staphylococcus</taxon>
    </lineage>
</organism>
<name>ROT_STAAC</name>
<evidence type="ECO:0000250" key="1"/>
<evidence type="ECO:0000255" key="2"/>
<evidence type="ECO:0000269" key="3">
    <source>
    </source>
</evidence>
<evidence type="ECO:0000305" key="4"/>